<evidence type="ECO:0000250" key="1"/>
<evidence type="ECO:0000305" key="2"/>
<name>CP1A1_CHESA</name>
<organism>
    <name type="scientific">Chelon saliens</name>
    <name type="common">Leaping mullet</name>
    <name type="synonym">Liza saliens</name>
    <dbReference type="NCBI Taxonomy" id="48192"/>
    <lineage>
        <taxon>Eukaryota</taxon>
        <taxon>Metazoa</taxon>
        <taxon>Chordata</taxon>
        <taxon>Craniata</taxon>
        <taxon>Vertebrata</taxon>
        <taxon>Euteleostomi</taxon>
        <taxon>Actinopterygii</taxon>
        <taxon>Neopterygii</taxon>
        <taxon>Teleostei</taxon>
        <taxon>Neoteleostei</taxon>
        <taxon>Acanthomorphata</taxon>
        <taxon>Ovalentaria</taxon>
        <taxon>Mugilomorphae</taxon>
        <taxon>Mugilidae</taxon>
        <taxon>Chelon</taxon>
    </lineage>
</organism>
<sequence>MALMILPFIGALSVSESLVAVVTVCLVYLIIKSFQDKIPEGLSRLPGPKPLPIIGNVLEVGSRPYLSLTEMGKRYGNVFQIQIGMRPVVVLSGNETVRQALIKQGDEFAGRPDLYSFRFISEGKSLAFSTDQAGVWRARRKLAYSALRSFSTLEGTTPEYSCVLEEHISKEAKYLIQQLDTVMKADGSFDPFRYIVVSVANVICGMCFGRRYDHHDQELLSLVNLSDEFGQVVGSGNPADFIPILQYLPNKTMKKFVSINDRFISFVQKIVSEHYATFNKDNIRDITDSLIDHCEDRKLDENANVQMSDEKVVGIVNDLFGAGFDTISTALSWSVMYLVAYPEIQEXLYQELKENVGLDRTPVLSDRNNLPLLESFILEIFRHSSFLPFTIPHCTTKDTSLNGYYIPKDTCVFINQWQINHDPELWKEPSSFNPDRFLSADGTEVNKVDGEKVMIFGMGKRRCIGEVIARNEVYLFLAILIQKLHFCNLPGEPLDMTPEYGLTMKHKRCQLRATARVRSDH</sequence>
<protein>
    <recommendedName>
        <fullName>Cytochrome P450 1A1</fullName>
        <ecNumber>1.14.14.1</ecNumber>
    </recommendedName>
    <alternativeName>
        <fullName>CYPIA1</fullName>
    </alternativeName>
</protein>
<keyword id="KW-0256">Endoplasmic reticulum</keyword>
<keyword id="KW-0349">Heme</keyword>
<keyword id="KW-0408">Iron</keyword>
<keyword id="KW-0472">Membrane</keyword>
<keyword id="KW-0479">Metal-binding</keyword>
<keyword id="KW-0492">Microsome</keyword>
<keyword id="KW-0503">Monooxygenase</keyword>
<keyword id="KW-0560">Oxidoreductase</keyword>
<accession>Q9W683</accession>
<dbReference type="EC" id="1.14.14.1"/>
<dbReference type="EMBL" id="AF072899">
    <property type="protein sequence ID" value="AAD22398.1"/>
    <property type="molecule type" value="mRNA"/>
</dbReference>
<dbReference type="GO" id="GO:0005789">
    <property type="term" value="C:endoplasmic reticulum membrane"/>
    <property type="evidence" value="ECO:0007669"/>
    <property type="project" value="UniProtKB-SubCell"/>
</dbReference>
<dbReference type="GO" id="GO:0020037">
    <property type="term" value="F:heme binding"/>
    <property type="evidence" value="ECO:0007669"/>
    <property type="project" value="InterPro"/>
</dbReference>
<dbReference type="GO" id="GO:0005506">
    <property type="term" value="F:iron ion binding"/>
    <property type="evidence" value="ECO:0007669"/>
    <property type="project" value="InterPro"/>
</dbReference>
<dbReference type="GO" id="GO:0004508">
    <property type="term" value="F:steroid 17-alpha-monooxygenase activity"/>
    <property type="evidence" value="ECO:0007669"/>
    <property type="project" value="TreeGrafter"/>
</dbReference>
<dbReference type="GO" id="GO:0042446">
    <property type="term" value="P:hormone biosynthetic process"/>
    <property type="evidence" value="ECO:0007669"/>
    <property type="project" value="TreeGrafter"/>
</dbReference>
<dbReference type="GO" id="GO:0042448">
    <property type="term" value="P:progesterone metabolic process"/>
    <property type="evidence" value="ECO:0007669"/>
    <property type="project" value="TreeGrafter"/>
</dbReference>
<dbReference type="CDD" id="cd20676">
    <property type="entry name" value="CYP1A"/>
    <property type="match status" value="1"/>
</dbReference>
<dbReference type="FunFam" id="1.10.630.10:FF:000002">
    <property type="entry name" value="Cytochrome P450 1A1"/>
    <property type="match status" value="1"/>
</dbReference>
<dbReference type="Gene3D" id="1.10.630.10">
    <property type="entry name" value="Cytochrome P450"/>
    <property type="match status" value="1"/>
</dbReference>
<dbReference type="InterPro" id="IPR001128">
    <property type="entry name" value="Cyt_P450"/>
</dbReference>
<dbReference type="InterPro" id="IPR017972">
    <property type="entry name" value="Cyt_P450_CS"/>
</dbReference>
<dbReference type="InterPro" id="IPR002401">
    <property type="entry name" value="Cyt_P450_E_grp-I"/>
</dbReference>
<dbReference type="InterPro" id="IPR008066">
    <property type="entry name" value="Cyt_P450_E_grp-I_CYP1"/>
</dbReference>
<dbReference type="InterPro" id="IPR036396">
    <property type="entry name" value="Cyt_P450_sf"/>
</dbReference>
<dbReference type="PANTHER" id="PTHR24289:SF21">
    <property type="entry name" value="CYTOCHROME P450 1A"/>
    <property type="match status" value="1"/>
</dbReference>
<dbReference type="PANTHER" id="PTHR24289">
    <property type="entry name" value="STEROID 17-ALPHA-HYDROXYLASE/17,20 LYASE"/>
    <property type="match status" value="1"/>
</dbReference>
<dbReference type="Pfam" id="PF00067">
    <property type="entry name" value="p450"/>
    <property type="match status" value="1"/>
</dbReference>
<dbReference type="PRINTS" id="PR00463">
    <property type="entry name" value="EP450I"/>
</dbReference>
<dbReference type="PRINTS" id="PR01683">
    <property type="entry name" value="EP450ICYP1A"/>
</dbReference>
<dbReference type="PRINTS" id="PR00385">
    <property type="entry name" value="P450"/>
</dbReference>
<dbReference type="SUPFAM" id="SSF48264">
    <property type="entry name" value="Cytochrome P450"/>
    <property type="match status" value="1"/>
</dbReference>
<dbReference type="PROSITE" id="PS00086">
    <property type="entry name" value="CYTOCHROME_P450"/>
    <property type="match status" value="1"/>
</dbReference>
<feature type="chain" id="PRO_0000051639" description="Cytochrome P450 1A1">
    <location>
        <begin position="1"/>
        <end position="521"/>
    </location>
</feature>
<feature type="binding site" evidence="1">
    <location>
        <position position="229"/>
    </location>
    <ligand>
        <name>substrate</name>
    </ligand>
</feature>
<feature type="binding site" description="axial binding residue" evidence="1">
    <location>
        <position position="463"/>
    </location>
    <ligand>
        <name>heme</name>
        <dbReference type="ChEBI" id="CHEBI:30413"/>
    </ligand>
    <ligandPart>
        <name>Fe</name>
        <dbReference type="ChEBI" id="CHEBI:18248"/>
    </ligandPart>
</feature>
<reference key="1">
    <citation type="submission" date="1998-06" db="EMBL/GenBank/DDBJ databases">
        <title>Cloning and sequencing of mullet (Liza saliens) liver cytochrome P450 1A1.</title>
        <authorList>
            <person name="Sen A."/>
            <person name="Buhler D.R."/>
            <person name="Wang-Buhler J.-L."/>
        </authorList>
    </citation>
    <scope>NUCLEOTIDE SEQUENCE [MRNA]</scope>
    <source>
        <tissue>Liver</tissue>
    </source>
</reference>
<proteinExistence type="evidence at transcript level"/>
<comment type="function">
    <text>Cytochromes P450 are a group of heme-thiolate monooxygenases. They oxidize a variety of structurally unrelated compounds, including steroids, fatty acids, and xenobiotics.</text>
</comment>
<comment type="catalytic activity">
    <reaction>
        <text>an organic molecule + reduced [NADPH--hemoprotein reductase] + O2 = an alcohol + oxidized [NADPH--hemoprotein reductase] + H2O + H(+)</text>
        <dbReference type="Rhea" id="RHEA:17149"/>
        <dbReference type="Rhea" id="RHEA-COMP:11964"/>
        <dbReference type="Rhea" id="RHEA-COMP:11965"/>
        <dbReference type="ChEBI" id="CHEBI:15377"/>
        <dbReference type="ChEBI" id="CHEBI:15378"/>
        <dbReference type="ChEBI" id="CHEBI:15379"/>
        <dbReference type="ChEBI" id="CHEBI:30879"/>
        <dbReference type="ChEBI" id="CHEBI:57618"/>
        <dbReference type="ChEBI" id="CHEBI:58210"/>
        <dbReference type="ChEBI" id="CHEBI:142491"/>
        <dbReference type="EC" id="1.14.14.1"/>
    </reaction>
</comment>
<comment type="cofactor">
    <cofactor evidence="1">
        <name>heme</name>
        <dbReference type="ChEBI" id="CHEBI:30413"/>
    </cofactor>
</comment>
<comment type="subcellular location">
    <subcellularLocation>
        <location>Endoplasmic reticulum membrane</location>
        <topology>Peripheral membrane protein</topology>
    </subcellularLocation>
    <subcellularLocation>
        <location>Microsome membrane</location>
        <topology>Peripheral membrane protein</topology>
    </subcellularLocation>
</comment>
<comment type="similarity">
    <text evidence="2">Belongs to the cytochrome P450 family.</text>
</comment>
<gene>
    <name type="primary">cyp1a1</name>
</gene>